<gene>
    <name evidence="1" type="primary">psbN</name>
</gene>
<protein>
    <recommendedName>
        <fullName evidence="1">Protein PsbN</fullName>
    </recommendedName>
</protein>
<organism>
    <name type="scientific">Cunninghamia lanceolata</name>
    <name type="common">China fir</name>
    <name type="synonym">Pinus lanceolata</name>
    <dbReference type="NCBI Taxonomy" id="28977"/>
    <lineage>
        <taxon>Eukaryota</taxon>
        <taxon>Viridiplantae</taxon>
        <taxon>Streptophyta</taxon>
        <taxon>Embryophyta</taxon>
        <taxon>Tracheophyta</taxon>
        <taxon>Spermatophyta</taxon>
        <taxon>Pinopsida</taxon>
        <taxon>Pinidae</taxon>
        <taxon>Conifers II</taxon>
        <taxon>Cupressales</taxon>
        <taxon>Cupressaceae</taxon>
        <taxon>Cunninghamia</taxon>
    </lineage>
</organism>
<dbReference type="EMBL" id="AF528898">
    <property type="protein sequence ID" value="AAQ09379.2"/>
    <property type="molecule type" value="Genomic_DNA"/>
</dbReference>
<dbReference type="RefSeq" id="YP_008082139.1">
    <property type="nucleotide sequence ID" value="NC_021437.1"/>
</dbReference>
<dbReference type="SMR" id="Q6EYJ4"/>
<dbReference type="GeneID" id="15824160"/>
<dbReference type="GO" id="GO:0009535">
    <property type="term" value="C:chloroplast thylakoid membrane"/>
    <property type="evidence" value="ECO:0007669"/>
    <property type="project" value="UniProtKB-SubCell"/>
</dbReference>
<dbReference type="GO" id="GO:0015979">
    <property type="term" value="P:photosynthesis"/>
    <property type="evidence" value="ECO:0007669"/>
    <property type="project" value="InterPro"/>
</dbReference>
<dbReference type="HAMAP" id="MF_00293">
    <property type="entry name" value="PSII_PsbN"/>
    <property type="match status" value="1"/>
</dbReference>
<dbReference type="InterPro" id="IPR003398">
    <property type="entry name" value="PSII_PsbN"/>
</dbReference>
<dbReference type="PANTHER" id="PTHR35326">
    <property type="entry name" value="PROTEIN PSBN"/>
    <property type="match status" value="1"/>
</dbReference>
<dbReference type="PANTHER" id="PTHR35326:SF3">
    <property type="entry name" value="PROTEIN PSBN"/>
    <property type="match status" value="1"/>
</dbReference>
<dbReference type="Pfam" id="PF02468">
    <property type="entry name" value="PsbN"/>
    <property type="match status" value="1"/>
</dbReference>
<accession>Q6EYJ4</accession>
<keyword id="KW-0150">Chloroplast</keyword>
<keyword id="KW-0472">Membrane</keyword>
<keyword id="KW-0934">Plastid</keyword>
<keyword id="KW-0793">Thylakoid</keyword>
<keyword id="KW-0812">Transmembrane</keyword>
<keyword id="KW-1133">Transmembrane helix</keyword>
<reference key="1">
    <citation type="submission" date="2002-07" db="EMBL/GenBank/DDBJ databases">
        <title>Parsing out signal and noise for seed-plant phylogenetic inference.</title>
        <authorList>
            <person name="Graham S.W."/>
            <person name="Rai H.S."/>
            <person name="Ikegami K."/>
            <person name="Reeves P.A."/>
            <person name="Olmstead R.G."/>
        </authorList>
    </citation>
    <scope>NUCLEOTIDE SEQUENCE [GENOMIC DNA]</scope>
</reference>
<comment type="function">
    <text evidence="1">May play a role in photosystem I and II biogenesis.</text>
</comment>
<comment type="subcellular location">
    <subcellularLocation>
        <location evidence="1">Plastid</location>
        <location evidence="1">Chloroplast thylakoid membrane</location>
        <topology evidence="1">Single-pass membrane protein</topology>
    </subcellularLocation>
</comment>
<comment type="similarity">
    <text evidence="1">Belongs to the PsbN family.</text>
</comment>
<comment type="caution">
    <text evidence="1">Originally thought to be a component of PSII; based on experiments in Synechocystis, N.tabacum and barley, and its absence from PSII in T.elongatus and T.vulcanus, this is probably not true.</text>
</comment>
<name>PSBN_CUNLA</name>
<proteinExistence type="inferred from homology"/>
<evidence type="ECO:0000255" key="1">
    <source>
        <dbReference type="HAMAP-Rule" id="MF_00293"/>
    </source>
</evidence>
<feature type="chain" id="PRO_0000207889" description="Protein PsbN">
    <location>
        <begin position="1"/>
        <end position="43"/>
    </location>
</feature>
<feature type="transmembrane region" description="Helical" evidence="1">
    <location>
        <begin position="5"/>
        <end position="27"/>
    </location>
</feature>
<sequence length="43" mass="4781">METATLVAISISCLLVSFTGYALYTAFGQPSEQLRDPFEEHED</sequence>
<geneLocation type="chloroplast"/>